<reference key="1">
    <citation type="journal article" date="2007" name="Science">
        <title>The Fusarium graminearum genome reveals a link between localized polymorphism and pathogen specialization.</title>
        <authorList>
            <person name="Cuomo C.A."/>
            <person name="Gueldener U."/>
            <person name="Xu J.-R."/>
            <person name="Trail F."/>
            <person name="Turgeon B.G."/>
            <person name="Di Pietro A."/>
            <person name="Walton J.D."/>
            <person name="Ma L.-J."/>
            <person name="Baker S.E."/>
            <person name="Rep M."/>
            <person name="Adam G."/>
            <person name="Antoniw J."/>
            <person name="Baldwin T."/>
            <person name="Calvo S.E."/>
            <person name="Chang Y.-L."/>
            <person name="DeCaprio D."/>
            <person name="Gale L.R."/>
            <person name="Gnerre S."/>
            <person name="Goswami R.S."/>
            <person name="Hammond-Kosack K."/>
            <person name="Harris L.J."/>
            <person name="Hilburn K."/>
            <person name="Kennell J.C."/>
            <person name="Kroken S."/>
            <person name="Magnuson J.K."/>
            <person name="Mannhaupt G."/>
            <person name="Mauceli E.W."/>
            <person name="Mewes H.-W."/>
            <person name="Mitterbauer R."/>
            <person name="Muehlbauer G."/>
            <person name="Muensterkoetter M."/>
            <person name="Nelson D."/>
            <person name="O'Donnell K."/>
            <person name="Ouellet T."/>
            <person name="Qi W."/>
            <person name="Quesneville H."/>
            <person name="Roncero M.I.G."/>
            <person name="Seong K.-Y."/>
            <person name="Tetko I.V."/>
            <person name="Urban M."/>
            <person name="Waalwijk C."/>
            <person name="Ward T.J."/>
            <person name="Yao J."/>
            <person name="Birren B.W."/>
            <person name="Kistler H.C."/>
        </authorList>
    </citation>
    <scope>NUCLEOTIDE SEQUENCE [LARGE SCALE GENOMIC DNA]</scope>
    <source>
        <strain>ATCC MYA-4620 / CBS 123657 / FGSC 9075 / NRRL 31084 / PH-1</strain>
    </source>
</reference>
<reference key="2">
    <citation type="journal article" date="2010" name="Nature">
        <title>Comparative genomics reveals mobile pathogenicity chromosomes in Fusarium.</title>
        <authorList>
            <person name="Ma L.-J."/>
            <person name="van der Does H.C."/>
            <person name="Borkovich K.A."/>
            <person name="Coleman J.J."/>
            <person name="Daboussi M.-J."/>
            <person name="Di Pietro A."/>
            <person name="Dufresne M."/>
            <person name="Freitag M."/>
            <person name="Grabherr M."/>
            <person name="Henrissat B."/>
            <person name="Houterman P.M."/>
            <person name="Kang S."/>
            <person name="Shim W.-B."/>
            <person name="Woloshuk C."/>
            <person name="Xie X."/>
            <person name="Xu J.-R."/>
            <person name="Antoniw J."/>
            <person name="Baker S.E."/>
            <person name="Bluhm B.H."/>
            <person name="Breakspear A."/>
            <person name="Brown D.W."/>
            <person name="Butchko R.A.E."/>
            <person name="Chapman S."/>
            <person name="Coulson R."/>
            <person name="Coutinho P.M."/>
            <person name="Danchin E.G.J."/>
            <person name="Diener A."/>
            <person name="Gale L.R."/>
            <person name="Gardiner D.M."/>
            <person name="Goff S."/>
            <person name="Hammond-Kosack K.E."/>
            <person name="Hilburn K."/>
            <person name="Hua-Van A."/>
            <person name="Jonkers W."/>
            <person name="Kazan K."/>
            <person name="Kodira C.D."/>
            <person name="Koehrsen M."/>
            <person name="Kumar L."/>
            <person name="Lee Y.-H."/>
            <person name="Li L."/>
            <person name="Manners J.M."/>
            <person name="Miranda-Saavedra D."/>
            <person name="Mukherjee M."/>
            <person name="Park G."/>
            <person name="Park J."/>
            <person name="Park S.-Y."/>
            <person name="Proctor R.H."/>
            <person name="Regev A."/>
            <person name="Ruiz-Roldan M.C."/>
            <person name="Sain D."/>
            <person name="Sakthikumar S."/>
            <person name="Sykes S."/>
            <person name="Schwartz D.C."/>
            <person name="Turgeon B.G."/>
            <person name="Wapinski I."/>
            <person name="Yoder O."/>
            <person name="Young S."/>
            <person name="Zeng Q."/>
            <person name="Zhou S."/>
            <person name="Galagan J."/>
            <person name="Cuomo C.A."/>
            <person name="Kistler H.C."/>
            <person name="Rep M."/>
        </authorList>
    </citation>
    <scope>GENOME REANNOTATION</scope>
    <source>
        <strain>ATCC MYA-4620 / CBS 123657 / FGSC 9075 / NRRL 31084 / PH-1</strain>
    </source>
</reference>
<reference key="3">
    <citation type="journal article" date="2015" name="BMC Genomics">
        <title>The completed genome sequence of the pathogenic ascomycete fungus Fusarium graminearum.</title>
        <authorList>
            <person name="King R."/>
            <person name="Urban M."/>
            <person name="Hammond-Kosack M.C.U."/>
            <person name="Hassani-Pak K."/>
            <person name="Hammond-Kosack K.E."/>
        </authorList>
    </citation>
    <scope>NUCLEOTIDE SEQUENCE [LARGE SCALE GENOMIC DNA]</scope>
    <source>
        <strain>ATCC MYA-4620 / CBS 123657 / FGSC 9075 / NRRL 31084 / PH-1</strain>
    </source>
</reference>
<reference key="4">
    <citation type="journal article" date="2012" name="Environ. Microbiol.">
        <title>Production of novel fusarielins by ectopic activation of the polyketide synthase 9 cluster in Fusarium graminearum.</title>
        <authorList>
            <person name="Soerensen J.L."/>
            <person name="Hansen F.T."/>
            <person name="Sondergaard T.E."/>
            <person name="Staerk D."/>
            <person name="Lee T.V."/>
            <person name="Wimmer R."/>
            <person name="Klitgaard L.G."/>
            <person name="Purup S."/>
            <person name="Giese H."/>
            <person name="Frandsen R.J."/>
        </authorList>
    </citation>
    <scope>FUNCTION</scope>
</reference>
<protein>
    <recommendedName>
        <fullName evidence="4">Fusarielin biosynthesis cluster transcription factor FSL7</fullName>
    </recommendedName>
    <alternativeName>
        <fullName evidence="4">Fusarielin biosynthesis cluster protein 7</fullName>
    </alternativeName>
</protein>
<proteinExistence type="inferred from homology"/>
<evidence type="ECO:0000255" key="1">
    <source>
        <dbReference type="PROSITE-ProRule" id="PRU00227"/>
    </source>
</evidence>
<evidence type="ECO:0000256" key="2">
    <source>
        <dbReference type="SAM" id="MobiDB-lite"/>
    </source>
</evidence>
<evidence type="ECO:0000269" key="3">
    <source>
    </source>
</evidence>
<evidence type="ECO:0000303" key="4">
    <source>
    </source>
</evidence>
<sequence length="496" mass="54157">MSQPCKDSDAKLRAACDRCHELKIRCTRTGGTESRCDRCEKNDIDCVYRAHRRIGRPKSQKSRCGPNTTARQNDTTTRGRIQQEQQEQMDISPPENRDSINSDFDFSIFEASGAVEWHRSSDVINVSTHQVSSTHPPFISPDCSLSHESSMSQTGSGSPFSMLNIGTMPVCDLDLSTLHGYGPSTDLVRSINHRSGSENESMEGNAELQSTQSASGSPQEEDQMLEDRLLRHQAKLRCLYSTVDATRNLISTTNDTVSHGAPLDKVLEAIMELVEILQTNANHTSSSSSSNSTTVDGPSEIRNQSRSRQDIANFNDIAILHVSISYAYIVKILAPIILSLEKSSVPVGSTSSSTYNDTTAHPSSASLPSQTGGPTKPRTVSVSLGSFSLASKPALNAQILLGMISRMLDQLHDATQPILMQVRHHHVPTQPVALQEREHHDAAMTREQHVSTGHGPDRHTSPVLSSAQAAVDSIRNEEKELLAKLNKVGNSTSATW</sequence>
<keyword id="KW-0238">DNA-binding</keyword>
<keyword id="KW-0479">Metal-binding</keyword>
<keyword id="KW-0539">Nucleus</keyword>
<keyword id="KW-1185">Reference proteome</keyword>
<keyword id="KW-0804">Transcription</keyword>
<keyword id="KW-0805">Transcription regulation</keyword>
<keyword id="KW-0862">Zinc</keyword>
<feature type="chain" id="PRO_0000444964" description="Fusarielin biosynthesis cluster transcription factor FSL7">
    <location>
        <begin position="1"/>
        <end position="496"/>
    </location>
</feature>
<feature type="DNA-binding region" description="Zn(2)-C6 fungal-type" evidence="1">
    <location>
        <begin position="16"/>
        <end position="46"/>
    </location>
</feature>
<feature type="region of interest" description="Disordered" evidence="2">
    <location>
        <begin position="57"/>
        <end position="102"/>
    </location>
</feature>
<feature type="region of interest" description="Disordered" evidence="2">
    <location>
        <begin position="189"/>
        <end position="224"/>
    </location>
</feature>
<feature type="region of interest" description="Disordered" evidence="2">
    <location>
        <begin position="281"/>
        <end position="307"/>
    </location>
</feature>
<feature type="region of interest" description="Disordered" evidence="2">
    <location>
        <begin position="348"/>
        <end position="379"/>
    </location>
</feature>
<feature type="region of interest" description="Disordered" evidence="2">
    <location>
        <begin position="444"/>
        <end position="470"/>
    </location>
</feature>
<feature type="compositionally biased region" description="Polar residues" evidence="2">
    <location>
        <begin position="65"/>
        <end position="89"/>
    </location>
</feature>
<feature type="compositionally biased region" description="Polar residues" evidence="2">
    <location>
        <begin position="207"/>
        <end position="218"/>
    </location>
</feature>
<feature type="compositionally biased region" description="Low complexity" evidence="2">
    <location>
        <begin position="281"/>
        <end position="294"/>
    </location>
</feature>
<feature type="compositionally biased region" description="Polar residues" evidence="2">
    <location>
        <begin position="355"/>
        <end position="379"/>
    </location>
</feature>
<feature type="compositionally biased region" description="Basic and acidic residues" evidence="2">
    <location>
        <begin position="444"/>
        <end position="460"/>
    </location>
</feature>
<organism>
    <name type="scientific">Gibberella zeae (strain ATCC MYA-4620 / CBS 123657 / FGSC 9075 / NRRL 31084 / PH-1)</name>
    <name type="common">Wheat head blight fungus</name>
    <name type="synonym">Fusarium graminearum</name>
    <dbReference type="NCBI Taxonomy" id="229533"/>
    <lineage>
        <taxon>Eukaryota</taxon>
        <taxon>Fungi</taxon>
        <taxon>Dikarya</taxon>
        <taxon>Ascomycota</taxon>
        <taxon>Pezizomycotina</taxon>
        <taxon>Sordariomycetes</taxon>
        <taxon>Hypocreomycetidae</taxon>
        <taxon>Hypocreales</taxon>
        <taxon>Nectriaceae</taxon>
        <taxon>Fusarium</taxon>
    </lineage>
</organism>
<name>FSL7_GIBZE</name>
<accession>I1S160</accession>
<dbReference type="EMBL" id="HG970332">
    <property type="protein sequence ID" value="CEF75880.1"/>
    <property type="molecule type" value="Genomic_DNA"/>
</dbReference>
<dbReference type="RefSeq" id="XP_011319437.1">
    <property type="nucleotide sequence ID" value="XM_011321135.1"/>
</dbReference>
<dbReference type="SMR" id="I1S160"/>
<dbReference type="STRING" id="229533.I1S160"/>
<dbReference type="KEGG" id="fgr:FGSG_10458"/>
<dbReference type="VEuPathDB" id="FungiDB:FGRAMPH1_01G08153"/>
<dbReference type="eggNOG" id="ENOG502SV4P">
    <property type="taxonomic scope" value="Eukaryota"/>
</dbReference>
<dbReference type="HOGENOM" id="CLU_617607_0_0_1"/>
<dbReference type="InParanoid" id="I1S160"/>
<dbReference type="OrthoDB" id="127652at110618"/>
<dbReference type="PHI-base" id="PHI:1766"/>
<dbReference type="Proteomes" id="UP000070720">
    <property type="component" value="Chromosome 1"/>
</dbReference>
<dbReference type="GO" id="GO:0005634">
    <property type="term" value="C:nucleus"/>
    <property type="evidence" value="ECO:0007669"/>
    <property type="project" value="UniProtKB-SubCell"/>
</dbReference>
<dbReference type="GO" id="GO:0003677">
    <property type="term" value="F:DNA binding"/>
    <property type="evidence" value="ECO:0007669"/>
    <property type="project" value="UniProtKB-KW"/>
</dbReference>
<dbReference type="GO" id="GO:0000981">
    <property type="term" value="F:DNA-binding transcription factor activity, RNA polymerase II-specific"/>
    <property type="evidence" value="ECO:0007669"/>
    <property type="project" value="InterPro"/>
</dbReference>
<dbReference type="GO" id="GO:0008270">
    <property type="term" value="F:zinc ion binding"/>
    <property type="evidence" value="ECO:0007669"/>
    <property type="project" value="InterPro"/>
</dbReference>
<dbReference type="CDD" id="cd00067">
    <property type="entry name" value="GAL4"/>
    <property type="match status" value="1"/>
</dbReference>
<dbReference type="Gene3D" id="4.10.240.10">
    <property type="entry name" value="Zn(2)-C6 fungal-type DNA-binding domain"/>
    <property type="match status" value="1"/>
</dbReference>
<dbReference type="InterPro" id="IPR036864">
    <property type="entry name" value="Zn2-C6_fun-type_DNA-bd_sf"/>
</dbReference>
<dbReference type="InterPro" id="IPR001138">
    <property type="entry name" value="Zn2Cys6_DnaBD"/>
</dbReference>
<dbReference type="Pfam" id="PF00172">
    <property type="entry name" value="Zn_clus"/>
    <property type="match status" value="1"/>
</dbReference>
<dbReference type="SMART" id="SM00066">
    <property type="entry name" value="GAL4"/>
    <property type="match status" value="1"/>
</dbReference>
<dbReference type="SUPFAM" id="SSF57701">
    <property type="entry name" value="Zn2/Cys6 DNA-binding domain"/>
    <property type="match status" value="1"/>
</dbReference>
<dbReference type="PROSITE" id="PS00463">
    <property type="entry name" value="ZN2_CY6_FUNGAL_1"/>
    <property type="match status" value="1"/>
</dbReference>
<dbReference type="PROSITE" id="PS50048">
    <property type="entry name" value="ZN2_CY6_FUNGAL_2"/>
    <property type="match status" value="1"/>
</dbReference>
<gene>
    <name evidence="4" type="primary">FSL7</name>
    <name type="ORF">FG10458</name>
    <name type="ORF">FGRAMPH1_01T08153</name>
</gene>
<comment type="function">
    <text evidence="3">Transcription regulator that specifically up-regulates the gene cluster that mediates the biosynthesis of fusarielins F, G and H, decaketide compounds with 5 methylations and a decaline core that act as mycoestrogens as they stimulate growth of MCF-7 breast cancer cells (PubMed:22252016). Probably binds the 5'-CGGNNNCCG-3' motif present in the promoter of all the cluster genes (PubMed:22252016).</text>
</comment>
<comment type="subcellular location">
    <subcellularLocation>
        <location evidence="1">Nucleus</location>
    </subcellularLocation>
</comment>